<geneLocation type="mitochondrion"/>
<gene>
    <name type="primary">COX2</name>
    <name type="synonym">COXII</name>
</gene>
<evidence type="ECO:0000250" key="1">
    <source>
        <dbReference type="UniProtKB" id="P00410"/>
    </source>
</evidence>
<evidence type="ECO:0000255" key="2"/>
<evidence type="ECO:0000305" key="3"/>
<organism>
    <name type="scientific">Cyanidium caldarium</name>
    <name type="common">Red alga</name>
    <dbReference type="NCBI Taxonomy" id="2771"/>
    <lineage>
        <taxon>Eukaryota</taxon>
        <taxon>Rhodophyta</taxon>
        <taxon>Bangiophyceae</taxon>
        <taxon>Cyanidiales</taxon>
        <taxon>Cyanidiaceae</taxon>
        <taxon>Cyanidium</taxon>
    </lineage>
</organism>
<dbReference type="EC" id="7.1.1.9"/>
<dbReference type="EMBL" id="Z48930">
    <property type="protein sequence ID" value="CAA88769.1"/>
    <property type="molecule type" value="Genomic_DNA"/>
</dbReference>
<dbReference type="PIR" id="S62759">
    <property type="entry name" value="S62759"/>
</dbReference>
<dbReference type="SMR" id="P48870"/>
<dbReference type="GO" id="GO:0005743">
    <property type="term" value="C:mitochondrial inner membrane"/>
    <property type="evidence" value="ECO:0007669"/>
    <property type="project" value="UniProtKB-SubCell"/>
</dbReference>
<dbReference type="GO" id="GO:0005507">
    <property type="term" value="F:copper ion binding"/>
    <property type="evidence" value="ECO:0007669"/>
    <property type="project" value="InterPro"/>
</dbReference>
<dbReference type="GO" id="GO:0004129">
    <property type="term" value="F:cytochrome-c oxidase activity"/>
    <property type="evidence" value="ECO:0007669"/>
    <property type="project" value="UniProtKB-EC"/>
</dbReference>
<dbReference type="GO" id="GO:0042773">
    <property type="term" value="P:ATP synthesis coupled electron transport"/>
    <property type="evidence" value="ECO:0007669"/>
    <property type="project" value="TreeGrafter"/>
</dbReference>
<dbReference type="CDD" id="cd13912">
    <property type="entry name" value="CcO_II_C"/>
    <property type="match status" value="1"/>
</dbReference>
<dbReference type="FunFam" id="1.10.287.90:FF:000004">
    <property type="entry name" value="Cytochrome c oxidase subunit 2"/>
    <property type="match status" value="1"/>
</dbReference>
<dbReference type="FunFam" id="2.60.40.420:FF:000001">
    <property type="entry name" value="Cytochrome c oxidase subunit 2"/>
    <property type="match status" value="1"/>
</dbReference>
<dbReference type="Gene3D" id="1.10.287.90">
    <property type="match status" value="1"/>
</dbReference>
<dbReference type="Gene3D" id="2.60.40.420">
    <property type="entry name" value="Cupredoxins - blue copper proteins"/>
    <property type="match status" value="1"/>
</dbReference>
<dbReference type="InterPro" id="IPR045187">
    <property type="entry name" value="CcO_II"/>
</dbReference>
<dbReference type="InterPro" id="IPR002429">
    <property type="entry name" value="CcO_II-like_C"/>
</dbReference>
<dbReference type="InterPro" id="IPR034210">
    <property type="entry name" value="CcO_II_C"/>
</dbReference>
<dbReference type="InterPro" id="IPR001505">
    <property type="entry name" value="Copper_CuA"/>
</dbReference>
<dbReference type="InterPro" id="IPR008972">
    <property type="entry name" value="Cupredoxin"/>
</dbReference>
<dbReference type="InterPro" id="IPR014222">
    <property type="entry name" value="Cyt_c_oxidase_su2"/>
</dbReference>
<dbReference type="InterPro" id="IPR011759">
    <property type="entry name" value="Cyt_c_oxidase_su2_TM_dom"/>
</dbReference>
<dbReference type="InterPro" id="IPR036257">
    <property type="entry name" value="Cyt_c_oxidase_su2_TM_sf"/>
</dbReference>
<dbReference type="NCBIfam" id="TIGR02866">
    <property type="entry name" value="CoxB"/>
    <property type="match status" value="1"/>
</dbReference>
<dbReference type="PANTHER" id="PTHR22888:SF9">
    <property type="entry name" value="CYTOCHROME C OXIDASE SUBUNIT 2"/>
    <property type="match status" value="1"/>
</dbReference>
<dbReference type="PANTHER" id="PTHR22888">
    <property type="entry name" value="CYTOCHROME C OXIDASE, SUBUNIT II"/>
    <property type="match status" value="1"/>
</dbReference>
<dbReference type="Pfam" id="PF00116">
    <property type="entry name" value="COX2"/>
    <property type="match status" value="1"/>
</dbReference>
<dbReference type="Pfam" id="PF02790">
    <property type="entry name" value="COX2_TM"/>
    <property type="match status" value="1"/>
</dbReference>
<dbReference type="PRINTS" id="PR01166">
    <property type="entry name" value="CYCOXIDASEII"/>
</dbReference>
<dbReference type="SUPFAM" id="SSF49503">
    <property type="entry name" value="Cupredoxins"/>
    <property type="match status" value="1"/>
</dbReference>
<dbReference type="SUPFAM" id="SSF81464">
    <property type="entry name" value="Cytochrome c oxidase subunit II-like, transmembrane region"/>
    <property type="match status" value="1"/>
</dbReference>
<dbReference type="PROSITE" id="PS00078">
    <property type="entry name" value="COX2"/>
    <property type="match status" value="1"/>
</dbReference>
<dbReference type="PROSITE" id="PS50857">
    <property type="entry name" value="COX2_CUA"/>
    <property type="match status" value="1"/>
</dbReference>
<dbReference type="PROSITE" id="PS50999">
    <property type="entry name" value="COX2_TM"/>
    <property type="match status" value="1"/>
</dbReference>
<keyword id="KW-0186">Copper</keyword>
<keyword id="KW-0249">Electron transport</keyword>
<keyword id="KW-0460">Magnesium</keyword>
<keyword id="KW-0472">Membrane</keyword>
<keyword id="KW-0479">Metal-binding</keyword>
<keyword id="KW-0496">Mitochondrion</keyword>
<keyword id="KW-0999">Mitochondrion inner membrane</keyword>
<keyword id="KW-0679">Respiratory chain</keyword>
<keyword id="KW-1278">Translocase</keyword>
<keyword id="KW-0812">Transmembrane</keyword>
<keyword id="KW-1133">Transmembrane helix</keyword>
<keyword id="KW-0813">Transport</keyword>
<comment type="function">
    <text evidence="1">Component of the cytochrome c oxidase, the last enzyme in the mitochondrial electron transport chain which drives oxidative phosphorylation. The respiratory chain contains 3 multisubunit complexes succinate dehydrogenase (complex II, CII), ubiquinol-cytochrome c oxidoreductase (cytochrome b-c1 complex, complex III, CIII) and cytochrome c oxidase (complex IV, CIV), that cooperate to transfer electrons derived from NADH and succinate to molecular oxygen, creating an electrochemical gradient over the inner membrane that drives transmembrane transport and the ATP synthase. Cytochrome c oxidase is the component of the respiratory chain that catalyzes the reduction of oxygen to water. Electrons originating from reduced cytochrome c in the intermembrane space (IMS) are transferred via the dinuclear copper A center (CU(A)) of subunit 2 and heme A of subunit 1 to the active site in subunit 1, a binuclear center (BNC) formed by heme A3 and copper B (CU(B)). The BNC reduces molecular oxygen to 2 water molecules using 4 electrons from cytochrome c in the IMS and 4 protons from the mitochondrial matrix.</text>
</comment>
<comment type="catalytic activity">
    <reaction evidence="1">
        <text>4 Fe(II)-[cytochrome c] + O2 + 8 H(+)(in) = 4 Fe(III)-[cytochrome c] + 2 H2O + 4 H(+)(out)</text>
        <dbReference type="Rhea" id="RHEA:11436"/>
        <dbReference type="Rhea" id="RHEA-COMP:10350"/>
        <dbReference type="Rhea" id="RHEA-COMP:14399"/>
        <dbReference type="ChEBI" id="CHEBI:15377"/>
        <dbReference type="ChEBI" id="CHEBI:15378"/>
        <dbReference type="ChEBI" id="CHEBI:15379"/>
        <dbReference type="ChEBI" id="CHEBI:29033"/>
        <dbReference type="ChEBI" id="CHEBI:29034"/>
        <dbReference type="EC" id="7.1.1.9"/>
    </reaction>
    <physiologicalReaction direction="left-to-right" evidence="1">
        <dbReference type="Rhea" id="RHEA:11437"/>
    </physiologicalReaction>
</comment>
<comment type="cofactor">
    <cofactor evidence="1">
        <name>Cu cation</name>
        <dbReference type="ChEBI" id="CHEBI:23378"/>
    </cofactor>
    <text evidence="1">Binds a dinuclear copper A center per subunit.</text>
</comment>
<comment type="subunit">
    <text evidence="1">Component of the cytochrome c oxidase (complex IV, CIV), a multisubunit enzyme composed of a catalytic core of 3 subunits and several supernumerary subunits. The complex exists as a monomer or a dimer and forms supercomplexes (SCs) in the inner mitochondrial membrane with ubiquinol-cytochrome c oxidoreductase (cytochrome b-c1 complex, complex III, CIII).</text>
</comment>
<comment type="subcellular location">
    <subcellularLocation>
        <location evidence="1">Mitochondrion inner membrane</location>
        <topology evidence="1">Multi-pass membrane protein</topology>
    </subcellularLocation>
</comment>
<comment type="similarity">
    <text evidence="3">Belongs to the cytochrome c oxidase subunit 2 family.</text>
</comment>
<name>COX2_CYACA</name>
<accession>P48870</accession>
<feature type="chain" id="PRO_0000183562" description="Cytochrome c oxidase subunit 2">
    <location>
        <begin position="1"/>
        <end position="255"/>
    </location>
</feature>
<feature type="topological domain" description="Mitochondrial intermembrane" evidence="2">
    <location>
        <begin position="1"/>
        <end position="42"/>
    </location>
</feature>
<feature type="transmembrane region" description="Helical" evidence="2">
    <location>
        <begin position="43"/>
        <end position="63"/>
    </location>
</feature>
<feature type="topological domain" description="Mitochondrial matrix" evidence="2">
    <location>
        <begin position="64"/>
        <end position="83"/>
    </location>
</feature>
<feature type="transmembrane region" description="Helical" evidence="2">
    <location>
        <begin position="84"/>
        <end position="104"/>
    </location>
</feature>
<feature type="topological domain" description="Mitochondrial intermembrane" evidence="2">
    <location>
        <begin position="105"/>
        <end position="255"/>
    </location>
</feature>
<feature type="binding site" evidence="1">
    <location>
        <position position="187"/>
    </location>
    <ligand>
        <name>Cu cation</name>
        <dbReference type="ChEBI" id="CHEBI:23378"/>
        <label>A1</label>
    </ligand>
</feature>
<feature type="binding site" evidence="1">
    <location>
        <position position="222"/>
    </location>
    <ligand>
        <name>Cu cation</name>
        <dbReference type="ChEBI" id="CHEBI:23378"/>
        <label>A1</label>
    </ligand>
</feature>
<feature type="binding site" evidence="1">
    <location>
        <position position="222"/>
    </location>
    <ligand>
        <name>Cu cation</name>
        <dbReference type="ChEBI" id="CHEBI:23378"/>
        <label>A2</label>
    </ligand>
</feature>
<feature type="binding site" evidence="1">
    <location>
        <position position="224"/>
    </location>
    <ligand>
        <name>Cu cation</name>
        <dbReference type="ChEBI" id="CHEBI:23378"/>
        <label>A2</label>
    </ligand>
</feature>
<feature type="binding site" evidence="1">
    <location>
        <position position="224"/>
    </location>
    <ligand>
        <name>Mg(2+)</name>
        <dbReference type="ChEBI" id="CHEBI:18420"/>
        <note>ligand shared with subunit 1</note>
    </ligand>
</feature>
<feature type="binding site" evidence="1">
    <location>
        <position position="226"/>
    </location>
    <ligand>
        <name>Cu cation</name>
        <dbReference type="ChEBI" id="CHEBI:23378"/>
        <label>A1</label>
    </ligand>
</feature>
<feature type="binding site" evidence="1">
    <location>
        <position position="226"/>
    </location>
    <ligand>
        <name>Cu cation</name>
        <dbReference type="ChEBI" id="CHEBI:23378"/>
        <label>A2</label>
    </ligand>
</feature>
<feature type="binding site" evidence="1">
    <location>
        <position position="230"/>
    </location>
    <ligand>
        <name>Cu cation</name>
        <dbReference type="ChEBI" id="CHEBI:23378"/>
        <label>A2</label>
    </ligand>
</feature>
<feature type="binding site" evidence="1">
    <location>
        <position position="233"/>
    </location>
    <ligand>
        <name>Cu cation</name>
        <dbReference type="ChEBI" id="CHEBI:23378"/>
        <label>A1</label>
    </ligand>
</feature>
<proteinExistence type="inferred from homology"/>
<protein>
    <recommendedName>
        <fullName>Cytochrome c oxidase subunit 2</fullName>
        <ecNumber>7.1.1.9</ecNumber>
    </recommendedName>
    <alternativeName>
        <fullName>Cytochrome c oxidase polypeptide II</fullName>
    </alternativeName>
</protein>
<sequence length="255" mass="29512">MKFFFFSFINYKVLNDAARPWQIGFQDPATPIMEGIVNLHHDIIFFLIIIIIFVSWILFRTLFLFNSKTNPVAYNFSHGTFIELLWTLTPSLVLIGIAVPSFALLYSIDEIIDPAITIKAVGRQWYWSYEYSDYVNEENEFLAFHSYILPEEDLELGQFRLLEVDNRIIIPVNTHIRIIVTGADVIHSWAVPSLGVKCDAIPGRLNQISFFIKREGIYYGQCSEICGVNHGFMPIVIEAVSFDDYIRWVQNKILD</sequence>
<reference key="1">
    <citation type="thesis" date="1995" institute="Justus Liebig University / Frankfurt" country="Germany">
        <authorList>
            <person name="Viehmann S."/>
        </authorList>
    </citation>
    <scope>NUCLEOTIDE SEQUENCE [GENOMIC DNA]</scope>
    <source>
        <strain>RK-1</strain>
    </source>
</reference>